<accession>A6U5N7</accession>
<comment type="function">
    <text evidence="1">Catalyzes the transfer of a ribosyl phosphate group from 5-phosphoribose 1-diphosphate to orotate, leading to the formation of orotidine monophosphate (OMP).</text>
</comment>
<comment type="catalytic activity">
    <reaction evidence="1">
        <text>orotidine 5'-phosphate + diphosphate = orotate + 5-phospho-alpha-D-ribose 1-diphosphate</text>
        <dbReference type="Rhea" id="RHEA:10380"/>
        <dbReference type="ChEBI" id="CHEBI:30839"/>
        <dbReference type="ChEBI" id="CHEBI:33019"/>
        <dbReference type="ChEBI" id="CHEBI:57538"/>
        <dbReference type="ChEBI" id="CHEBI:58017"/>
        <dbReference type="EC" id="2.4.2.10"/>
    </reaction>
</comment>
<comment type="cofactor">
    <cofactor evidence="1">
        <name>Mg(2+)</name>
        <dbReference type="ChEBI" id="CHEBI:18420"/>
    </cofactor>
</comment>
<comment type="pathway">
    <text evidence="1">Pyrimidine metabolism; UMP biosynthesis via de novo pathway; UMP from orotate: step 1/2.</text>
</comment>
<comment type="subunit">
    <text evidence="1">Homodimer.</text>
</comment>
<comment type="similarity">
    <text evidence="1">Belongs to the purine/pyrimidine phosphoribosyltransferase family. PyrE subfamily.</text>
</comment>
<organism>
    <name type="scientific">Sinorhizobium medicae (strain WSM419)</name>
    <name type="common">Ensifer medicae</name>
    <dbReference type="NCBI Taxonomy" id="366394"/>
    <lineage>
        <taxon>Bacteria</taxon>
        <taxon>Pseudomonadati</taxon>
        <taxon>Pseudomonadota</taxon>
        <taxon>Alphaproteobacteria</taxon>
        <taxon>Hyphomicrobiales</taxon>
        <taxon>Rhizobiaceae</taxon>
        <taxon>Sinorhizobium/Ensifer group</taxon>
        <taxon>Sinorhizobium</taxon>
    </lineage>
</organism>
<protein>
    <recommendedName>
        <fullName evidence="1">Orotate phosphoribosyltransferase</fullName>
        <shortName evidence="1">OPRT</shortName>
        <shortName evidence="1">OPRTase</shortName>
        <ecNumber evidence="1">2.4.2.10</ecNumber>
    </recommendedName>
</protein>
<sequence length="232" mass="25340">MFSNAFTEKAVMAELVAKMLWEIKAVHFRADEPYKLSSGMASPVYIDCRKLISYPRIRSAVMDFAAATILREAGFEQFDVVAGGETAGIPFAAMLAERLGLPMIYVRKAPKGHGRNAQIEGNMPEGARVLVIEDLTTAGGSMFKFIDAIRAAGGMVEHGIALFYYDIFPEARGDMKSKGVDLHFIATWRNVLSVARELALFDDKTLNEVEAFLDAPLAWSAKNGGVGALADR</sequence>
<name>PYRE_SINMW</name>
<evidence type="ECO:0000255" key="1">
    <source>
        <dbReference type="HAMAP-Rule" id="MF_01208"/>
    </source>
</evidence>
<reference key="1">
    <citation type="submission" date="2007-06" db="EMBL/GenBank/DDBJ databases">
        <title>Complete sequence of Sinorhizobium medicae WSM419 chromosome.</title>
        <authorList>
            <consortium name="US DOE Joint Genome Institute"/>
            <person name="Copeland A."/>
            <person name="Lucas S."/>
            <person name="Lapidus A."/>
            <person name="Barry K."/>
            <person name="Glavina del Rio T."/>
            <person name="Dalin E."/>
            <person name="Tice H."/>
            <person name="Pitluck S."/>
            <person name="Chain P."/>
            <person name="Malfatti S."/>
            <person name="Shin M."/>
            <person name="Vergez L."/>
            <person name="Schmutz J."/>
            <person name="Larimer F."/>
            <person name="Land M."/>
            <person name="Hauser L."/>
            <person name="Kyrpides N."/>
            <person name="Mikhailova N."/>
            <person name="Reeve W.G."/>
            <person name="Richardson P."/>
        </authorList>
    </citation>
    <scope>NUCLEOTIDE SEQUENCE [LARGE SCALE GENOMIC DNA]</scope>
    <source>
        <strain>WSM419</strain>
    </source>
</reference>
<proteinExistence type="inferred from homology"/>
<keyword id="KW-0328">Glycosyltransferase</keyword>
<keyword id="KW-0460">Magnesium</keyword>
<keyword id="KW-0665">Pyrimidine biosynthesis</keyword>
<keyword id="KW-0808">Transferase</keyword>
<dbReference type="EC" id="2.4.2.10" evidence="1"/>
<dbReference type="EMBL" id="CP000738">
    <property type="protein sequence ID" value="ABR58967.1"/>
    <property type="molecule type" value="Genomic_DNA"/>
</dbReference>
<dbReference type="RefSeq" id="WP_011974320.1">
    <property type="nucleotide sequence ID" value="NC_009636.1"/>
</dbReference>
<dbReference type="RefSeq" id="YP_001325802.1">
    <property type="nucleotide sequence ID" value="NC_009636.1"/>
</dbReference>
<dbReference type="SMR" id="A6U5N7"/>
<dbReference type="STRING" id="366394.Smed_0107"/>
<dbReference type="KEGG" id="smd:Smed_0107"/>
<dbReference type="PATRIC" id="fig|366394.8.peg.3163"/>
<dbReference type="eggNOG" id="COG0461">
    <property type="taxonomic scope" value="Bacteria"/>
</dbReference>
<dbReference type="HOGENOM" id="CLU_074878_1_0_5"/>
<dbReference type="OrthoDB" id="9802134at2"/>
<dbReference type="UniPathway" id="UPA00070">
    <property type="reaction ID" value="UER00119"/>
</dbReference>
<dbReference type="Proteomes" id="UP000001108">
    <property type="component" value="Chromosome"/>
</dbReference>
<dbReference type="GO" id="GO:0000287">
    <property type="term" value="F:magnesium ion binding"/>
    <property type="evidence" value="ECO:0007669"/>
    <property type="project" value="UniProtKB-UniRule"/>
</dbReference>
<dbReference type="GO" id="GO:0004588">
    <property type="term" value="F:orotate phosphoribosyltransferase activity"/>
    <property type="evidence" value="ECO:0007669"/>
    <property type="project" value="UniProtKB-UniRule"/>
</dbReference>
<dbReference type="GO" id="GO:0044205">
    <property type="term" value="P:'de novo' UMP biosynthetic process"/>
    <property type="evidence" value="ECO:0007669"/>
    <property type="project" value="UniProtKB-UniRule"/>
</dbReference>
<dbReference type="GO" id="GO:0019856">
    <property type="term" value="P:pyrimidine nucleobase biosynthetic process"/>
    <property type="evidence" value="ECO:0007669"/>
    <property type="project" value="TreeGrafter"/>
</dbReference>
<dbReference type="CDD" id="cd06223">
    <property type="entry name" value="PRTases_typeI"/>
    <property type="match status" value="1"/>
</dbReference>
<dbReference type="Gene3D" id="3.40.50.2020">
    <property type="match status" value="1"/>
</dbReference>
<dbReference type="HAMAP" id="MF_01208">
    <property type="entry name" value="PyrE"/>
    <property type="match status" value="1"/>
</dbReference>
<dbReference type="InterPro" id="IPR023031">
    <property type="entry name" value="OPRT"/>
</dbReference>
<dbReference type="InterPro" id="IPR004467">
    <property type="entry name" value="Or_phspho_trans_dom"/>
</dbReference>
<dbReference type="InterPro" id="IPR000836">
    <property type="entry name" value="PRibTrfase_dom"/>
</dbReference>
<dbReference type="InterPro" id="IPR029057">
    <property type="entry name" value="PRTase-like"/>
</dbReference>
<dbReference type="NCBIfam" id="NF001729">
    <property type="entry name" value="PRK00455.1-3"/>
    <property type="match status" value="1"/>
</dbReference>
<dbReference type="NCBIfam" id="TIGR00336">
    <property type="entry name" value="pyrE"/>
    <property type="match status" value="1"/>
</dbReference>
<dbReference type="PANTHER" id="PTHR19278">
    <property type="entry name" value="OROTATE PHOSPHORIBOSYLTRANSFERASE"/>
    <property type="match status" value="1"/>
</dbReference>
<dbReference type="PANTHER" id="PTHR19278:SF9">
    <property type="entry name" value="URIDINE 5'-MONOPHOSPHATE SYNTHASE"/>
    <property type="match status" value="1"/>
</dbReference>
<dbReference type="Pfam" id="PF00156">
    <property type="entry name" value="Pribosyltran"/>
    <property type="match status" value="1"/>
</dbReference>
<dbReference type="SUPFAM" id="SSF53271">
    <property type="entry name" value="PRTase-like"/>
    <property type="match status" value="1"/>
</dbReference>
<gene>
    <name evidence="1" type="primary">pyrE</name>
    <name type="ordered locus">Smed_0107</name>
</gene>
<feature type="chain" id="PRO_1000066302" description="Orotate phosphoribosyltransferase">
    <location>
        <begin position="1"/>
        <end position="232"/>
    </location>
</feature>
<feature type="binding site" evidence="1">
    <location>
        <position position="107"/>
    </location>
    <ligand>
        <name>5-phospho-alpha-D-ribose 1-diphosphate</name>
        <dbReference type="ChEBI" id="CHEBI:58017"/>
        <note>ligand shared between dimeric partners</note>
    </ligand>
</feature>
<feature type="binding site" description="in other chain" evidence="1">
    <location>
        <position position="108"/>
    </location>
    <ligand>
        <name>5-phospho-alpha-D-ribose 1-diphosphate</name>
        <dbReference type="ChEBI" id="CHEBI:58017"/>
        <note>ligand shared between dimeric partners</note>
    </ligand>
</feature>
<feature type="binding site" evidence="1">
    <location>
        <position position="111"/>
    </location>
    <ligand>
        <name>5-phospho-alpha-D-ribose 1-diphosphate</name>
        <dbReference type="ChEBI" id="CHEBI:58017"/>
        <note>ligand shared between dimeric partners</note>
    </ligand>
</feature>
<feature type="binding site" evidence="1">
    <location>
        <position position="113"/>
    </location>
    <ligand>
        <name>5-phospho-alpha-D-ribose 1-diphosphate</name>
        <dbReference type="ChEBI" id="CHEBI:58017"/>
        <note>ligand shared between dimeric partners</note>
    </ligand>
</feature>
<feature type="binding site" description="in other chain" evidence="1">
    <location>
        <begin position="133"/>
        <end position="141"/>
    </location>
    <ligand>
        <name>5-phospho-alpha-D-ribose 1-diphosphate</name>
        <dbReference type="ChEBI" id="CHEBI:58017"/>
        <note>ligand shared between dimeric partners</note>
    </ligand>
</feature>
<feature type="binding site" evidence="1">
    <location>
        <position position="137"/>
    </location>
    <ligand>
        <name>orotate</name>
        <dbReference type="ChEBI" id="CHEBI:30839"/>
    </ligand>
</feature>